<keyword id="KW-0007">Acetylation</keyword>
<keyword id="KW-0025">Alternative splicing</keyword>
<keyword id="KW-0963">Cytoplasm</keyword>
<keyword id="KW-0903">Direct protein sequencing</keyword>
<keyword id="KW-0449">Lipoprotein</keyword>
<keyword id="KW-0472">Membrane</keyword>
<keyword id="KW-0488">Methylation</keyword>
<keyword id="KW-0576">Peroxisome</keyword>
<keyword id="KW-0962">Peroxisome biogenesis</keyword>
<keyword id="KW-0597">Phosphoprotein</keyword>
<keyword id="KW-0636">Prenylation</keyword>
<keyword id="KW-1185">Reference proteome</keyword>
<evidence type="ECO:0000250" key="1"/>
<evidence type="ECO:0000250" key="2">
    <source>
        <dbReference type="UniProtKB" id="P40855"/>
    </source>
</evidence>
<evidence type="ECO:0000250" key="3">
    <source>
        <dbReference type="UniProtKB" id="Q9QYU1"/>
    </source>
</evidence>
<evidence type="ECO:0000256" key="4">
    <source>
        <dbReference type="SAM" id="MobiDB-lite"/>
    </source>
</evidence>
<evidence type="ECO:0000303" key="5">
    <source>
    </source>
</evidence>
<evidence type="ECO:0000305" key="6"/>
<evidence type="ECO:0007744" key="7">
    <source>
    </source>
</evidence>
<evidence type="ECO:0007744" key="8">
    <source>
    </source>
</evidence>
<accession>Q8VCI5</accession>
<accession>Q4FJU7</accession>
<accession>Q8CEE1</accession>
<accession>Q921H0</accession>
<accession>Q9CZC1</accession>
<accession>Q9QUQ1</accession>
<protein>
    <recommendedName>
        <fullName>Peroxisomal biogenesis factor 19</fullName>
    </recommendedName>
    <alternativeName>
        <fullName>Peroxin-19</fullName>
    </alternativeName>
    <alternativeName>
        <fullName>Peroxisomal farnesylated protein</fullName>
        <shortName>PxF</shortName>
    </alternativeName>
</protein>
<proteinExistence type="evidence at protein level"/>
<comment type="function">
    <text evidence="2">Necessary for early peroxisomal biogenesis. Acts both as a cytosolic chaperone and as an import receptor for peroxisomal membrane proteins (PMPs). Binds and stabilizes newly synthesized PMPs in the cytoplasm by interacting with their hydrophobic membrane-spanning domains, and targets them to the peroxisome membrane by binding to the integral membrane protein PEX3. Excludes CDKN2A from the nucleus and prevents its interaction with MDM2, which results in active degradation of TP53.</text>
</comment>
<comment type="subunit">
    <text evidence="1">Interacts with a broad range of peroxisomal membrane proteins, including PEX3, PEX10, PEX11A, PEX11B, PEX12, PEX13, PEX14 and PEX16, PXMP2/PMP22, PXMP4/PMP24, SLC25A17/PMP34, ABCD1/ALDP, ABCD2/ALDRP, and ABCD3/PMP70. Also interacts with the tumor suppressor CDKN2A/p19ARF (By similarity).</text>
</comment>
<comment type="interaction">
    <interactant intactId="EBI-1810767">
        <id>Q8VCI5</id>
    </interactant>
    <interactant intactId="EBI-1202306">
        <id>Q64364-1</id>
        <label>Cdkn2a</label>
    </interactant>
    <organismsDiffer>false</organismsDiffer>
    <experiments>4</experiments>
</comment>
<comment type="subcellular location">
    <subcellularLocation>
        <location evidence="2">Cytoplasm</location>
    </subcellularLocation>
    <subcellularLocation>
        <location evidence="2">Peroxisome membrane</location>
        <topology evidence="2">Lipid-anchor</topology>
        <orientation evidence="2">Cytoplasmic side</orientation>
    </subcellularLocation>
    <text evidence="2">Mainly cytoplasmic, some fraction membrane-associated to the outer surface of peroxisomes.</text>
</comment>
<comment type="alternative products">
    <event type="alternative splicing"/>
    <isoform>
        <id>Q8VCI5-1</id>
        <name>1</name>
        <sequence type="displayed"/>
    </isoform>
    <isoform>
        <id>Q8VCI5-2</id>
        <name>2</name>
        <sequence type="described" ref="VSP_012652"/>
    </isoform>
</comment>
<comment type="similarity">
    <text evidence="6">Belongs to the peroxin-19 family.</text>
</comment>
<feature type="initiator methionine" description="Removed" evidence="2">
    <location>
        <position position="1"/>
    </location>
</feature>
<feature type="chain" id="PRO_0000218760" description="Peroxisomal biogenesis factor 19">
    <location>
        <begin position="2"/>
        <end position="296"/>
    </location>
</feature>
<feature type="propeptide" id="PRO_0000396701" description="Removed in mature form" evidence="1">
    <location>
        <begin position="297"/>
        <end position="299"/>
    </location>
</feature>
<feature type="region of interest" description="Disordered" evidence="4">
    <location>
        <begin position="1"/>
        <end position="61"/>
    </location>
</feature>
<feature type="region of interest" description="Necessary for PEX19 function on peroxisome biogenesis" evidence="1">
    <location>
        <begin position="2"/>
        <end position="91"/>
    </location>
</feature>
<feature type="region of interest" description="Docking to the peroxisome membrane and binding to PEX3" evidence="1">
    <location>
        <begin position="2"/>
        <end position="56"/>
    </location>
</feature>
<feature type="compositionally biased region" description="Acidic residues" evidence="4">
    <location>
        <begin position="12"/>
        <end position="27"/>
    </location>
</feature>
<feature type="modified residue" description="N-acetylalanine" evidence="2">
    <location>
        <position position="2"/>
    </location>
</feature>
<feature type="modified residue" description="Phosphoserine" evidence="7">
    <location>
        <position position="35"/>
    </location>
</feature>
<feature type="modified residue" description="Phosphoserine" evidence="3">
    <location>
        <position position="66"/>
    </location>
</feature>
<feature type="modified residue" description="Phosphothreonine" evidence="8">
    <location>
        <position position="236"/>
    </location>
</feature>
<feature type="modified residue" description="Cysteine methyl ester" evidence="1">
    <location>
        <position position="296"/>
    </location>
</feature>
<feature type="lipid moiety-binding region" description="S-farnesyl cysteine" evidence="1">
    <location>
        <position position="296"/>
    </location>
</feature>
<feature type="splice variant" id="VSP_012652" description="In isoform 2." evidence="5">
    <location>
        <begin position="25"/>
        <end position="116"/>
    </location>
</feature>
<feature type="sequence conflict" description="In Ref. 2; BAB28468." evidence="6" ref="2">
    <original>K</original>
    <variation>E</variation>
    <location>
        <position position="31"/>
    </location>
</feature>
<feature type="sequence conflict" description="In Ref. 1; CAA70255/CAA70256 and 3; AAH12517." evidence="6" ref="1 3">
    <original>P</original>
    <variation>S</variation>
    <location>
        <position position="55"/>
    </location>
</feature>
<feature type="sequence conflict" description="In Ref. 2; BAB28468." evidence="6" ref="2">
    <original>E</original>
    <variation>K</variation>
    <location>
        <position position="110"/>
    </location>
</feature>
<reference key="1">
    <citation type="submission" date="1996-10" db="EMBL/GenBank/DDBJ databases">
        <authorList>
            <person name="Kammerer S."/>
        </authorList>
    </citation>
    <scope>NUCLEOTIDE SEQUENCE [GENOMIC DNA / MRNA] (ISOFORM 1)</scope>
    <source>
        <strain>129/SvJ</strain>
        <strain>BALB/cJ</strain>
        <tissue>Liver</tissue>
        <tissue>Lung</tissue>
    </source>
</reference>
<reference key="2">
    <citation type="journal article" date="2005" name="Science">
        <title>The transcriptional landscape of the mammalian genome.</title>
        <authorList>
            <person name="Carninci P."/>
            <person name="Kasukawa T."/>
            <person name="Katayama S."/>
            <person name="Gough J."/>
            <person name="Frith M.C."/>
            <person name="Maeda N."/>
            <person name="Oyama R."/>
            <person name="Ravasi T."/>
            <person name="Lenhard B."/>
            <person name="Wells C."/>
            <person name="Kodzius R."/>
            <person name="Shimokawa K."/>
            <person name="Bajic V.B."/>
            <person name="Brenner S.E."/>
            <person name="Batalov S."/>
            <person name="Forrest A.R."/>
            <person name="Zavolan M."/>
            <person name="Davis M.J."/>
            <person name="Wilming L.G."/>
            <person name="Aidinis V."/>
            <person name="Allen J.E."/>
            <person name="Ambesi-Impiombato A."/>
            <person name="Apweiler R."/>
            <person name="Aturaliya R.N."/>
            <person name="Bailey T.L."/>
            <person name="Bansal M."/>
            <person name="Baxter L."/>
            <person name="Beisel K.W."/>
            <person name="Bersano T."/>
            <person name="Bono H."/>
            <person name="Chalk A.M."/>
            <person name="Chiu K.P."/>
            <person name="Choudhary V."/>
            <person name="Christoffels A."/>
            <person name="Clutterbuck D.R."/>
            <person name="Crowe M.L."/>
            <person name="Dalla E."/>
            <person name="Dalrymple B.P."/>
            <person name="de Bono B."/>
            <person name="Della Gatta G."/>
            <person name="di Bernardo D."/>
            <person name="Down T."/>
            <person name="Engstrom P."/>
            <person name="Fagiolini M."/>
            <person name="Faulkner G."/>
            <person name="Fletcher C.F."/>
            <person name="Fukushima T."/>
            <person name="Furuno M."/>
            <person name="Futaki S."/>
            <person name="Gariboldi M."/>
            <person name="Georgii-Hemming P."/>
            <person name="Gingeras T.R."/>
            <person name="Gojobori T."/>
            <person name="Green R.E."/>
            <person name="Gustincich S."/>
            <person name="Harbers M."/>
            <person name="Hayashi Y."/>
            <person name="Hensch T.K."/>
            <person name="Hirokawa N."/>
            <person name="Hill D."/>
            <person name="Huminiecki L."/>
            <person name="Iacono M."/>
            <person name="Ikeo K."/>
            <person name="Iwama A."/>
            <person name="Ishikawa T."/>
            <person name="Jakt M."/>
            <person name="Kanapin A."/>
            <person name="Katoh M."/>
            <person name="Kawasawa Y."/>
            <person name="Kelso J."/>
            <person name="Kitamura H."/>
            <person name="Kitano H."/>
            <person name="Kollias G."/>
            <person name="Krishnan S.P."/>
            <person name="Kruger A."/>
            <person name="Kummerfeld S.K."/>
            <person name="Kurochkin I.V."/>
            <person name="Lareau L.F."/>
            <person name="Lazarevic D."/>
            <person name="Lipovich L."/>
            <person name="Liu J."/>
            <person name="Liuni S."/>
            <person name="McWilliam S."/>
            <person name="Madan Babu M."/>
            <person name="Madera M."/>
            <person name="Marchionni L."/>
            <person name="Matsuda H."/>
            <person name="Matsuzawa S."/>
            <person name="Miki H."/>
            <person name="Mignone F."/>
            <person name="Miyake S."/>
            <person name="Morris K."/>
            <person name="Mottagui-Tabar S."/>
            <person name="Mulder N."/>
            <person name="Nakano N."/>
            <person name="Nakauchi H."/>
            <person name="Ng P."/>
            <person name="Nilsson R."/>
            <person name="Nishiguchi S."/>
            <person name="Nishikawa S."/>
            <person name="Nori F."/>
            <person name="Ohara O."/>
            <person name="Okazaki Y."/>
            <person name="Orlando V."/>
            <person name="Pang K.C."/>
            <person name="Pavan W.J."/>
            <person name="Pavesi G."/>
            <person name="Pesole G."/>
            <person name="Petrovsky N."/>
            <person name="Piazza S."/>
            <person name="Reed J."/>
            <person name="Reid J.F."/>
            <person name="Ring B.Z."/>
            <person name="Ringwald M."/>
            <person name="Rost B."/>
            <person name="Ruan Y."/>
            <person name="Salzberg S.L."/>
            <person name="Sandelin A."/>
            <person name="Schneider C."/>
            <person name="Schoenbach C."/>
            <person name="Sekiguchi K."/>
            <person name="Semple C.A."/>
            <person name="Seno S."/>
            <person name="Sessa L."/>
            <person name="Sheng Y."/>
            <person name="Shibata Y."/>
            <person name="Shimada H."/>
            <person name="Shimada K."/>
            <person name="Silva D."/>
            <person name="Sinclair B."/>
            <person name="Sperling S."/>
            <person name="Stupka E."/>
            <person name="Sugiura K."/>
            <person name="Sultana R."/>
            <person name="Takenaka Y."/>
            <person name="Taki K."/>
            <person name="Tammoja K."/>
            <person name="Tan S.L."/>
            <person name="Tang S."/>
            <person name="Taylor M.S."/>
            <person name="Tegner J."/>
            <person name="Teichmann S.A."/>
            <person name="Ueda H.R."/>
            <person name="van Nimwegen E."/>
            <person name="Verardo R."/>
            <person name="Wei C.L."/>
            <person name="Yagi K."/>
            <person name="Yamanishi H."/>
            <person name="Zabarovsky E."/>
            <person name="Zhu S."/>
            <person name="Zimmer A."/>
            <person name="Hide W."/>
            <person name="Bult C."/>
            <person name="Grimmond S.M."/>
            <person name="Teasdale R.D."/>
            <person name="Liu E.T."/>
            <person name="Brusic V."/>
            <person name="Quackenbush J."/>
            <person name="Wahlestedt C."/>
            <person name="Mattick J.S."/>
            <person name="Hume D.A."/>
            <person name="Kai C."/>
            <person name="Sasaki D."/>
            <person name="Tomaru Y."/>
            <person name="Fukuda S."/>
            <person name="Kanamori-Katayama M."/>
            <person name="Suzuki M."/>
            <person name="Aoki J."/>
            <person name="Arakawa T."/>
            <person name="Iida J."/>
            <person name="Imamura K."/>
            <person name="Itoh M."/>
            <person name="Kato T."/>
            <person name="Kawaji H."/>
            <person name="Kawagashira N."/>
            <person name="Kawashima T."/>
            <person name="Kojima M."/>
            <person name="Kondo S."/>
            <person name="Konno H."/>
            <person name="Nakano K."/>
            <person name="Ninomiya N."/>
            <person name="Nishio T."/>
            <person name="Okada M."/>
            <person name="Plessy C."/>
            <person name="Shibata K."/>
            <person name="Shiraki T."/>
            <person name="Suzuki S."/>
            <person name="Tagami M."/>
            <person name="Waki K."/>
            <person name="Watahiki A."/>
            <person name="Okamura-Oho Y."/>
            <person name="Suzuki H."/>
            <person name="Kawai J."/>
            <person name="Hayashizaki Y."/>
        </authorList>
    </citation>
    <scope>NUCLEOTIDE SEQUENCE [LARGE SCALE MRNA] (ISOFORMS 1 AND 2)</scope>
    <source>
        <strain>C57BL/6J</strain>
        <tissue>Embryo</tissue>
        <tissue>Head</tissue>
        <tissue>Skin</tissue>
    </source>
</reference>
<reference key="3">
    <citation type="submission" date="2005-07" db="EMBL/GenBank/DDBJ databases">
        <title>Cloning of mouse full open reading frames in Gateway(R) system entry vector (pDONR201).</title>
        <authorList>
            <person name="Ebert L."/>
            <person name="Muenstermann E."/>
            <person name="Schatten R."/>
            <person name="Henze S."/>
            <person name="Bohn E."/>
            <person name="Mollenhauer J."/>
            <person name="Wiemann S."/>
            <person name="Schick M."/>
            <person name="Korn B."/>
        </authorList>
    </citation>
    <scope>NUCLEOTIDE SEQUENCE [LARGE SCALE MRNA] (ISOFORM 1)</scope>
</reference>
<reference key="4">
    <citation type="journal article" date="2004" name="Genome Res.">
        <title>The status, quality, and expansion of the NIH full-length cDNA project: the Mammalian Gene Collection (MGC).</title>
        <authorList>
            <consortium name="The MGC Project Team"/>
        </authorList>
    </citation>
    <scope>NUCLEOTIDE SEQUENCE [LARGE SCALE MRNA] (ISOFORM 1)</scope>
    <source>
        <strain>FVB/N</strain>
        <tissue>Eye</tissue>
        <tissue>Mammary tumor</tissue>
    </source>
</reference>
<reference key="5">
    <citation type="submission" date="2009-01" db="UniProtKB">
        <authorList>
            <person name="Lubec G."/>
            <person name="Sunyer B."/>
            <person name="Chen W.-Q."/>
        </authorList>
    </citation>
    <scope>PROTEIN SEQUENCE OF 218-227</scope>
    <scope>IDENTIFICATION BY MASS SPECTROMETRY</scope>
    <source>
        <strain>OF1</strain>
        <tissue>Hippocampus</tissue>
    </source>
</reference>
<reference key="6">
    <citation type="journal article" date="2007" name="Proc. Natl. Acad. Sci. U.S.A.">
        <title>Large-scale phosphorylation analysis of mouse liver.</title>
        <authorList>
            <person name="Villen J."/>
            <person name="Beausoleil S.A."/>
            <person name="Gerber S.A."/>
            <person name="Gygi S.P."/>
        </authorList>
    </citation>
    <scope>PHOSPHORYLATION [LARGE SCALE ANALYSIS] AT SER-35</scope>
    <scope>IDENTIFICATION BY MASS SPECTROMETRY [LARGE SCALE ANALYSIS]</scope>
    <source>
        <tissue>Liver</tissue>
    </source>
</reference>
<reference key="7">
    <citation type="journal article" date="2010" name="Cell">
        <title>A tissue-specific atlas of mouse protein phosphorylation and expression.</title>
        <authorList>
            <person name="Huttlin E.L."/>
            <person name="Jedrychowski M.P."/>
            <person name="Elias J.E."/>
            <person name="Goswami T."/>
            <person name="Rad R."/>
            <person name="Beausoleil S.A."/>
            <person name="Villen J."/>
            <person name="Haas W."/>
            <person name="Sowa M.E."/>
            <person name="Gygi S.P."/>
        </authorList>
    </citation>
    <scope>PHOSPHORYLATION [LARGE SCALE ANALYSIS] AT THR-236</scope>
    <scope>IDENTIFICATION BY MASS SPECTROMETRY [LARGE SCALE ANALYSIS]</scope>
    <source>
        <tissue>Brain</tissue>
        <tissue>Brown adipose tissue</tissue>
        <tissue>Heart</tissue>
        <tissue>Kidney</tissue>
        <tissue>Liver</tissue>
        <tissue>Lung</tissue>
        <tissue>Pancreas</tissue>
        <tissue>Spleen</tissue>
        <tissue>Testis</tissue>
    </source>
</reference>
<gene>
    <name type="primary">Pex19</name>
    <name type="synonym">Pxf</name>
</gene>
<name>PEX19_MOUSE</name>
<dbReference type="EMBL" id="Y09046">
    <property type="protein sequence ID" value="CAA70255.1"/>
    <property type="molecule type" value="mRNA"/>
</dbReference>
<dbReference type="EMBL" id="Y09047">
    <property type="protein sequence ID" value="CAA70256.1"/>
    <property type="molecule type" value="Genomic_DNA"/>
</dbReference>
<dbReference type="EMBL" id="AK012785">
    <property type="protein sequence ID" value="BAB28468.1"/>
    <property type="molecule type" value="mRNA"/>
</dbReference>
<dbReference type="EMBL" id="AK028449">
    <property type="protein sequence ID" value="BAC25957.1"/>
    <property type="molecule type" value="mRNA"/>
</dbReference>
<dbReference type="EMBL" id="AK029368">
    <property type="protein sequence ID" value="BAC26421.1"/>
    <property type="molecule type" value="mRNA"/>
</dbReference>
<dbReference type="EMBL" id="CT010305">
    <property type="protein sequence ID" value="CAJ18513.1"/>
    <property type="molecule type" value="mRNA"/>
</dbReference>
<dbReference type="EMBL" id="BC012517">
    <property type="protein sequence ID" value="AAH12517.1"/>
    <property type="molecule type" value="mRNA"/>
</dbReference>
<dbReference type="EMBL" id="BC019767">
    <property type="protein sequence ID" value="AAH19767.1"/>
    <property type="molecule type" value="mRNA"/>
</dbReference>
<dbReference type="CCDS" id="CCDS15508.1">
    <molecule id="Q8VCI5-1"/>
</dbReference>
<dbReference type="CCDS" id="CCDS48445.1">
    <molecule id="Q8VCI5-2"/>
</dbReference>
<dbReference type="RefSeq" id="NP_001152997.1">
    <molecule id="Q8VCI5-2"/>
    <property type="nucleotide sequence ID" value="NM_001159525.1"/>
</dbReference>
<dbReference type="RefSeq" id="NP_075528.3">
    <molecule id="Q8VCI5-1"/>
    <property type="nucleotide sequence ID" value="NM_023041.3"/>
</dbReference>
<dbReference type="SMR" id="Q8VCI5"/>
<dbReference type="BioGRID" id="202520">
    <property type="interactions" value="8"/>
</dbReference>
<dbReference type="FunCoup" id="Q8VCI5">
    <property type="interactions" value="3194"/>
</dbReference>
<dbReference type="IntAct" id="Q8VCI5">
    <property type="interactions" value="1"/>
</dbReference>
<dbReference type="STRING" id="10090.ENSMUSP00000075289"/>
<dbReference type="iPTMnet" id="Q8VCI5"/>
<dbReference type="PhosphoSitePlus" id="Q8VCI5"/>
<dbReference type="jPOST" id="Q8VCI5"/>
<dbReference type="PaxDb" id="10090-ENSMUSP00000075289"/>
<dbReference type="PeptideAtlas" id="Q8VCI5"/>
<dbReference type="ProteomicsDB" id="288037">
    <molecule id="Q8VCI5-1"/>
</dbReference>
<dbReference type="ProteomicsDB" id="288038">
    <molecule id="Q8VCI5-2"/>
</dbReference>
<dbReference type="Pumba" id="Q8VCI5"/>
<dbReference type="Antibodypedia" id="34274">
    <property type="antibodies" value="372 antibodies from 30 providers"/>
</dbReference>
<dbReference type="DNASU" id="19298"/>
<dbReference type="Ensembl" id="ENSMUST00000075895.9">
    <molecule id="Q8VCI5-1"/>
    <property type="protein sequence ID" value="ENSMUSP00000075289.3"/>
    <property type="gene ID" value="ENSMUSG00000003464.14"/>
</dbReference>
<dbReference type="Ensembl" id="ENSMUST00000111252.4">
    <molecule id="Q8VCI5-2"/>
    <property type="protein sequence ID" value="ENSMUSP00000106883.4"/>
    <property type="gene ID" value="ENSMUSG00000003464.14"/>
</dbReference>
<dbReference type="GeneID" id="19298"/>
<dbReference type="KEGG" id="mmu:19298"/>
<dbReference type="UCSC" id="uc007dpq.2">
    <molecule id="Q8VCI5-1"/>
    <property type="organism name" value="mouse"/>
</dbReference>
<dbReference type="UCSC" id="uc011wwj.1">
    <molecule id="Q8VCI5-2"/>
    <property type="organism name" value="mouse"/>
</dbReference>
<dbReference type="AGR" id="MGI:1334458"/>
<dbReference type="CTD" id="5824"/>
<dbReference type="MGI" id="MGI:1334458">
    <property type="gene designation" value="Pex19"/>
</dbReference>
<dbReference type="VEuPathDB" id="HostDB:ENSMUSG00000003464"/>
<dbReference type="eggNOG" id="KOG3133">
    <property type="taxonomic scope" value="Eukaryota"/>
</dbReference>
<dbReference type="GeneTree" id="ENSGT00390000010993"/>
<dbReference type="HOGENOM" id="CLU_043063_3_0_1"/>
<dbReference type="InParanoid" id="Q8VCI5"/>
<dbReference type="OMA" id="YEPMKEM"/>
<dbReference type="OrthoDB" id="21292at2759"/>
<dbReference type="PhylomeDB" id="Q8VCI5"/>
<dbReference type="TreeFam" id="TF315082"/>
<dbReference type="Reactome" id="R-MMU-1369062">
    <property type="pathway name" value="ABC transporters in lipid homeostasis"/>
</dbReference>
<dbReference type="Reactome" id="R-MMU-9603798">
    <property type="pathway name" value="Class I peroxisomal membrane protein import"/>
</dbReference>
<dbReference type="BioGRID-ORCS" id="19298">
    <property type="hits" value="8 hits in 79 CRISPR screens"/>
</dbReference>
<dbReference type="ChiTaRS" id="Pex19">
    <property type="organism name" value="mouse"/>
</dbReference>
<dbReference type="PRO" id="PR:Q8VCI5"/>
<dbReference type="Proteomes" id="UP000000589">
    <property type="component" value="Chromosome 1"/>
</dbReference>
<dbReference type="RNAct" id="Q8VCI5">
    <property type="molecule type" value="protein"/>
</dbReference>
<dbReference type="Bgee" id="ENSMUSG00000003464">
    <property type="expression patterns" value="Expressed in embryonic brain and 264 other cell types or tissues"/>
</dbReference>
<dbReference type="GO" id="GO:0005829">
    <property type="term" value="C:cytosol"/>
    <property type="evidence" value="ECO:0007669"/>
    <property type="project" value="Ensembl"/>
</dbReference>
<dbReference type="GO" id="GO:0005654">
    <property type="term" value="C:nucleoplasm"/>
    <property type="evidence" value="ECO:0007669"/>
    <property type="project" value="Ensembl"/>
</dbReference>
<dbReference type="GO" id="GO:0005778">
    <property type="term" value="C:peroxisomal membrane"/>
    <property type="evidence" value="ECO:0007669"/>
    <property type="project" value="UniProtKB-SubCell"/>
</dbReference>
<dbReference type="GO" id="GO:0032991">
    <property type="term" value="C:protein-containing complex"/>
    <property type="evidence" value="ECO:0007669"/>
    <property type="project" value="Ensembl"/>
</dbReference>
<dbReference type="GO" id="GO:0051117">
    <property type="term" value="F:ATPase binding"/>
    <property type="evidence" value="ECO:0007669"/>
    <property type="project" value="Ensembl"/>
</dbReference>
<dbReference type="GO" id="GO:0036105">
    <property type="term" value="F:peroxisome membrane class-1 targeting sequence binding"/>
    <property type="evidence" value="ECO:0007669"/>
    <property type="project" value="Ensembl"/>
</dbReference>
<dbReference type="GO" id="GO:0140597">
    <property type="term" value="F:protein carrier chaperone"/>
    <property type="evidence" value="ECO:0007669"/>
    <property type="project" value="Ensembl"/>
</dbReference>
<dbReference type="GO" id="GO:0061077">
    <property type="term" value="P:chaperone-mediated protein folding"/>
    <property type="evidence" value="ECO:0007669"/>
    <property type="project" value="Ensembl"/>
</dbReference>
<dbReference type="GO" id="GO:0016559">
    <property type="term" value="P:peroxisome fission"/>
    <property type="evidence" value="ECO:0007669"/>
    <property type="project" value="Ensembl"/>
</dbReference>
<dbReference type="GO" id="GO:0045046">
    <property type="term" value="P:protein import into peroxisome membrane"/>
    <property type="evidence" value="ECO:0007669"/>
    <property type="project" value="Ensembl"/>
</dbReference>
<dbReference type="GO" id="GO:0050821">
    <property type="term" value="P:protein stabilization"/>
    <property type="evidence" value="ECO:0007669"/>
    <property type="project" value="Ensembl"/>
</dbReference>
<dbReference type="GO" id="GO:0006625">
    <property type="term" value="P:protein targeting to peroxisome"/>
    <property type="evidence" value="ECO:0007669"/>
    <property type="project" value="Ensembl"/>
</dbReference>
<dbReference type="FunFam" id="1.20.120.900:FF:000001">
    <property type="entry name" value="Putative peroxisomal biogenesis factor 19"/>
    <property type="match status" value="1"/>
</dbReference>
<dbReference type="Gene3D" id="1.20.120.900">
    <property type="entry name" value="Pex19, mPTS binding domain"/>
    <property type="match status" value="1"/>
</dbReference>
<dbReference type="InterPro" id="IPR006708">
    <property type="entry name" value="Pex19"/>
</dbReference>
<dbReference type="InterPro" id="IPR038322">
    <property type="entry name" value="Pex19_C_sf"/>
</dbReference>
<dbReference type="PANTHER" id="PTHR12774">
    <property type="entry name" value="PEROXISOMAL BIOGENESIS FACTOR 19"/>
    <property type="match status" value="1"/>
</dbReference>
<dbReference type="PANTHER" id="PTHR12774:SF2">
    <property type="entry name" value="PEROXISOMAL BIOGENESIS FACTOR 19"/>
    <property type="match status" value="1"/>
</dbReference>
<dbReference type="Pfam" id="PF04614">
    <property type="entry name" value="Pex19"/>
    <property type="match status" value="1"/>
</dbReference>
<sequence length="299" mass="32733">MAAAEEGCGVGVEDDRELEELLESALDDFDKAKPSPEHAPTISAPDASGPQKRAPGDTAKDALFASQEKFFQELFDSELASQATAEFEKAMKELAEEEPHLVEQFQKLSEAAGRVGSDASSQQEFTSCLKETLSGLAKNATELQNSGMSEEELMKAMEGLGMDEGDGEASILPIMQSIMQNLLSKDVLYPSLKEITEKYPEWLQSHQDSTPPEQFEKYQQQHSVMVKICEQFEAETPTDSEATQRARFEAMLDLMQQLQALGHPPKELAGEMPPGLNFDLDALNLSGPPGANGEQCLIM</sequence>
<organism>
    <name type="scientific">Mus musculus</name>
    <name type="common">Mouse</name>
    <dbReference type="NCBI Taxonomy" id="10090"/>
    <lineage>
        <taxon>Eukaryota</taxon>
        <taxon>Metazoa</taxon>
        <taxon>Chordata</taxon>
        <taxon>Craniata</taxon>
        <taxon>Vertebrata</taxon>
        <taxon>Euteleostomi</taxon>
        <taxon>Mammalia</taxon>
        <taxon>Eutheria</taxon>
        <taxon>Euarchontoglires</taxon>
        <taxon>Glires</taxon>
        <taxon>Rodentia</taxon>
        <taxon>Myomorpha</taxon>
        <taxon>Muroidea</taxon>
        <taxon>Muridae</taxon>
        <taxon>Murinae</taxon>
        <taxon>Mus</taxon>
        <taxon>Mus</taxon>
    </lineage>
</organism>